<evidence type="ECO:0000305" key="1"/>
<feature type="chain" id="PRO_0000165948" description="Uncharacterized protein YsfB">
    <location>
        <begin position="1"/>
        <end position="368"/>
    </location>
</feature>
<feature type="sequence conflict" description="In Ref. 1; CAA99600." evidence="1" ref="1">
    <original>A</original>
    <variation>S</variation>
    <location>
        <position position="87"/>
    </location>
</feature>
<protein>
    <recommendedName>
        <fullName>Uncharacterized protein YsfB</fullName>
    </recommendedName>
</protein>
<proteinExistence type="inferred from homology"/>
<dbReference type="EMBL" id="Z75208">
    <property type="protein sequence ID" value="CAA99600.1"/>
    <property type="molecule type" value="Genomic_DNA"/>
</dbReference>
<dbReference type="EMBL" id="AL009126">
    <property type="protein sequence ID" value="CAB14827.2"/>
    <property type="molecule type" value="Genomic_DNA"/>
</dbReference>
<dbReference type="PIR" id="C69984">
    <property type="entry name" value="C69984"/>
</dbReference>
<dbReference type="RefSeq" id="NP_390745.2">
    <property type="nucleotide sequence ID" value="NC_000964.3"/>
</dbReference>
<dbReference type="RefSeq" id="WP_004398908.1">
    <property type="nucleotide sequence ID" value="NZ_OZ025638.1"/>
</dbReference>
<dbReference type="SMR" id="P94536"/>
<dbReference type="FunCoup" id="P94536">
    <property type="interactions" value="9"/>
</dbReference>
<dbReference type="STRING" id="224308.BSU28670"/>
<dbReference type="PaxDb" id="224308-BSU28670"/>
<dbReference type="DNASU" id="937437"/>
<dbReference type="EnsemblBacteria" id="CAB14827">
    <property type="protein sequence ID" value="CAB14827"/>
    <property type="gene ID" value="BSU_28670"/>
</dbReference>
<dbReference type="GeneID" id="937437"/>
<dbReference type="KEGG" id="bsu:BSU28670"/>
<dbReference type="PATRIC" id="fig|224308.179.peg.3115"/>
<dbReference type="eggNOG" id="COG3835">
    <property type="taxonomic scope" value="Bacteria"/>
</dbReference>
<dbReference type="InParanoid" id="P94536"/>
<dbReference type="OrthoDB" id="9792148at2"/>
<dbReference type="PhylomeDB" id="P94536"/>
<dbReference type="BioCyc" id="BSUB:BSU28670-MONOMER"/>
<dbReference type="Proteomes" id="UP000001570">
    <property type="component" value="Chromosome"/>
</dbReference>
<dbReference type="GO" id="GO:0003700">
    <property type="term" value="F:DNA-binding transcription factor activity"/>
    <property type="evidence" value="ECO:0000318"/>
    <property type="project" value="GO_Central"/>
</dbReference>
<dbReference type="GO" id="GO:0045893">
    <property type="term" value="P:positive regulation of DNA-templated transcription"/>
    <property type="evidence" value="ECO:0000318"/>
    <property type="project" value="GO_Central"/>
</dbReference>
<dbReference type="Gene3D" id="1.10.10.2840">
    <property type="entry name" value="PucR C-terminal helix-turn-helix domain"/>
    <property type="match status" value="1"/>
</dbReference>
<dbReference type="InterPro" id="IPR051448">
    <property type="entry name" value="CdaR-like_regulators"/>
</dbReference>
<dbReference type="InterPro" id="IPR041522">
    <property type="entry name" value="CdaR_GGDEF"/>
</dbReference>
<dbReference type="InterPro" id="IPR008599">
    <property type="entry name" value="Diacid_rec"/>
</dbReference>
<dbReference type="InterPro" id="IPR025736">
    <property type="entry name" value="PucR_C-HTH_dom"/>
</dbReference>
<dbReference type="InterPro" id="IPR042070">
    <property type="entry name" value="PucR_C-HTH_sf"/>
</dbReference>
<dbReference type="PANTHER" id="PTHR33744">
    <property type="entry name" value="CARBOHYDRATE DIACID REGULATOR"/>
    <property type="match status" value="1"/>
</dbReference>
<dbReference type="PANTHER" id="PTHR33744:SF16">
    <property type="entry name" value="CARBOHYDRATE DIACID REGULATOR"/>
    <property type="match status" value="1"/>
</dbReference>
<dbReference type="Pfam" id="PF05651">
    <property type="entry name" value="Diacid_rec"/>
    <property type="match status" value="1"/>
</dbReference>
<dbReference type="Pfam" id="PF17853">
    <property type="entry name" value="GGDEF_2"/>
    <property type="match status" value="1"/>
</dbReference>
<dbReference type="Pfam" id="PF13556">
    <property type="entry name" value="HTH_30"/>
    <property type="match status" value="1"/>
</dbReference>
<accession>P94536</accession>
<reference key="1">
    <citation type="journal article" date="1996" name="Microbiology">
        <title>The dnaB-pheA (256 degrees-240 degrees) region of the Bacillus subtilis chromosome containing genes responsible for stress responses, the utilization of plant cell walls and primary metabolism.</title>
        <authorList>
            <person name="Wipat A."/>
            <person name="Carter N."/>
            <person name="Brignell C.S."/>
            <person name="Guy J.B."/>
            <person name="Piper K."/>
            <person name="Sanders J."/>
            <person name="Emmerson P.T."/>
            <person name="Harwood C.R."/>
        </authorList>
    </citation>
    <scope>NUCLEOTIDE SEQUENCE [GENOMIC DNA]</scope>
</reference>
<reference key="2">
    <citation type="journal article" date="1997" name="Nature">
        <title>The complete genome sequence of the Gram-positive bacterium Bacillus subtilis.</title>
        <authorList>
            <person name="Kunst F."/>
            <person name="Ogasawara N."/>
            <person name="Moszer I."/>
            <person name="Albertini A.M."/>
            <person name="Alloni G."/>
            <person name="Azevedo V."/>
            <person name="Bertero M.G."/>
            <person name="Bessieres P."/>
            <person name="Bolotin A."/>
            <person name="Borchert S."/>
            <person name="Borriss R."/>
            <person name="Boursier L."/>
            <person name="Brans A."/>
            <person name="Braun M."/>
            <person name="Brignell S.C."/>
            <person name="Bron S."/>
            <person name="Brouillet S."/>
            <person name="Bruschi C.V."/>
            <person name="Caldwell B."/>
            <person name="Capuano V."/>
            <person name="Carter N.M."/>
            <person name="Choi S.-K."/>
            <person name="Codani J.-J."/>
            <person name="Connerton I.F."/>
            <person name="Cummings N.J."/>
            <person name="Daniel R.A."/>
            <person name="Denizot F."/>
            <person name="Devine K.M."/>
            <person name="Duesterhoeft A."/>
            <person name="Ehrlich S.D."/>
            <person name="Emmerson P.T."/>
            <person name="Entian K.-D."/>
            <person name="Errington J."/>
            <person name="Fabret C."/>
            <person name="Ferrari E."/>
            <person name="Foulger D."/>
            <person name="Fritz C."/>
            <person name="Fujita M."/>
            <person name="Fujita Y."/>
            <person name="Fuma S."/>
            <person name="Galizzi A."/>
            <person name="Galleron N."/>
            <person name="Ghim S.-Y."/>
            <person name="Glaser P."/>
            <person name="Goffeau A."/>
            <person name="Golightly E.J."/>
            <person name="Grandi G."/>
            <person name="Guiseppi G."/>
            <person name="Guy B.J."/>
            <person name="Haga K."/>
            <person name="Haiech J."/>
            <person name="Harwood C.R."/>
            <person name="Henaut A."/>
            <person name="Hilbert H."/>
            <person name="Holsappel S."/>
            <person name="Hosono S."/>
            <person name="Hullo M.-F."/>
            <person name="Itaya M."/>
            <person name="Jones L.-M."/>
            <person name="Joris B."/>
            <person name="Karamata D."/>
            <person name="Kasahara Y."/>
            <person name="Klaerr-Blanchard M."/>
            <person name="Klein C."/>
            <person name="Kobayashi Y."/>
            <person name="Koetter P."/>
            <person name="Koningstein G."/>
            <person name="Krogh S."/>
            <person name="Kumano M."/>
            <person name="Kurita K."/>
            <person name="Lapidus A."/>
            <person name="Lardinois S."/>
            <person name="Lauber J."/>
            <person name="Lazarevic V."/>
            <person name="Lee S.-M."/>
            <person name="Levine A."/>
            <person name="Liu H."/>
            <person name="Masuda S."/>
            <person name="Mauel C."/>
            <person name="Medigue C."/>
            <person name="Medina N."/>
            <person name="Mellado R.P."/>
            <person name="Mizuno M."/>
            <person name="Moestl D."/>
            <person name="Nakai S."/>
            <person name="Noback M."/>
            <person name="Noone D."/>
            <person name="O'Reilly M."/>
            <person name="Ogawa K."/>
            <person name="Ogiwara A."/>
            <person name="Oudega B."/>
            <person name="Park S.-H."/>
            <person name="Parro V."/>
            <person name="Pohl T.M."/>
            <person name="Portetelle D."/>
            <person name="Porwollik S."/>
            <person name="Prescott A.M."/>
            <person name="Presecan E."/>
            <person name="Pujic P."/>
            <person name="Purnelle B."/>
            <person name="Rapoport G."/>
            <person name="Rey M."/>
            <person name="Reynolds S."/>
            <person name="Rieger M."/>
            <person name="Rivolta C."/>
            <person name="Rocha E."/>
            <person name="Roche B."/>
            <person name="Rose M."/>
            <person name="Sadaie Y."/>
            <person name="Sato T."/>
            <person name="Scanlan E."/>
            <person name="Schleich S."/>
            <person name="Schroeter R."/>
            <person name="Scoffone F."/>
            <person name="Sekiguchi J."/>
            <person name="Sekowska A."/>
            <person name="Seror S.J."/>
            <person name="Serror P."/>
            <person name="Shin B.-S."/>
            <person name="Soldo B."/>
            <person name="Sorokin A."/>
            <person name="Tacconi E."/>
            <person name="Takagi T."/>
            <person name="Takahashi H."/>
            <person name="Takemaru K."/>
            <person name="Takeuchi M."/>
            <person name="Tamakoshi A."/>
            <person name="Tanaka T."/>
            <person name="Terpstra P."/>
            <person name="Tognoni A."/>
            <person name="Tosato V."/>
            <person name="Uchiyama S."/>
            <person name="Vandenbol M."/>
            <person name="Vannier F."/>
            <person name="Vassarotti A."/>
            <person name="Viari A."/>
            <person name="Wambutt R."/>
            <person name="Wedler E."/>
            <person name="Wedler H."/>
            <person name="Weitzenegger T."/>
            <person name="Winters P."/>
            <person name="Wipat A."/>
            <person name="Yamamoto H."/>
            <person name="Yamane K."/>
            <person name="Yasumoto K."/>
            <person name="Yata K."/>
            <person name="Yoshida K."/>
            <person name="Yoshikawa H.-F."/>
            <person name="Zumstein E."/>
            <person name="Yoshikawa H."/>
            <person name="Danchin A."/>
        </authorList>
    </citation>
    <scope>NUCLEOTIDE SEQUENCE [LARGE SCALE GENOMIC DNA]</scope>
    <source>
        <strain>168</strain>
    </source>
</reference>
<reference key="3">
    <citation type="journal article" date="2009" name="Microbiology">
        <title>From a consortium sequence to a unified sequence: the Bacillus subtilis 168 reference genome a decade later.</title>
        <authorList>
            <person name="Barbe V."/>
            <person name="Cruveiller S."/>
            <person name="Kunst F."/>
            <person name="Lenoble P."/>
            <person name="Meurice G."/>
            <person name="Sekowska A."/>
            <person name="Vallenet D."/>
            <person name="Wang T."/>
            <person name="Moszer I."/>
            <person name="Medigue C."/>
            <person name="Danchin A."/>
        </authorList>
    </citation>
    <scope>SEQUENCE REVISION TO 87</scope>
</reference>
<sequence length="368" mass="42595">MFLQPLLAKKIIAEVKKMYEREVIIVNTDGLIMAGTNDERVGQFHEGALICAKERRSVIITKEDETRLKGVKAGINLPVFFDHDVIAVFGLTGEPAEIQPFGELLRKMTELFIKESRHLEQSQWRERMLESFMIDWLQLKEWSPSFLEKAQLLGVDLSSRRQMILIQGYEWSPHDIEQMARSWKSSYPADLFIRWGNERILINHEVPQHEQRDRLLRKILHICSFANTASSQYTAAGAGRAVASSSLTDSYEQAEKALAVSLKRKTPIFEEDLKLDMCLTEISPGTRNEFPQRVLGKALEHQELMNTIRTFFHHDLSLKQTAEDMHIHINTLRYRLAKAEQLTGLRFDRTEDVVTMYVALYFLDQDTK</sequence>
<name>YSFB_BACSU</name>
<gene>
    <name type="primary">ysfB</name>
    <name type="ordered locus">BSU28670</name>
</gene>
<keyword id="KW-1185">Reference proteome</keyword>
<comment type="similarity">
    <text evidence="1">Belongs to the CdaR family.</text>
</comment>
<organism>
    <name type="scientific">Bacillus subtilis (strain 168)</name>
    <dbReference type="NCBI Taxonomy" id="224308"/>
    <lineage>
        <taxon>Bacteria</taxon>
        <taxon>Bacillati</taxon>
        <taxon>Bacillota</taxon>
        <taxon>Bacilli</taxon>
        <taxon>Bacillales</taxon>
        <taxon>Bacillaceae</taxon>
        <taxon>Bacillus</taxon>
    </lineage>
</organism>